<dbReference type="EC" id="1.14.11.4"/>
<dbReference type="EC" id="2.4.1.-"/>
<dbReference type="EMBL" id="AY653733">
    <property type="protein sequence ID" value="AAV50503.1"/>
    <property type="molecule type" value="Genomic_DNA"/>
</dbReference>
<dbReference type="EMBL" id="HQ336222">
    <property type="protein sequence ID" value="ADO18068.1"/>
    <property type="molecule type" value="Genomic_DNA"/>
</dbReference>
<dbReference type="EMBL" id="JN036606">
    <property type="protein sequence ID" value="AEJ34465.1"/>
    <property type="molecule type" value="Genomic_DNA"/>
</dbReference>
<dbReference type="PDB" id="6AX6">
    <property type="method" value="X-ray"/>
    <property type="resolution" value="2.24 A"/>
    <property type="chains" value="A/B=680-895"/>
</dbReference>
<dbReference type="PDB" id="6AX7">
    <property type="method" value="X-ray"/>
    <property type="resolution" value="2.00 A"/>
    <property type="chains" value="A/B=680-895"/>
</dbReference>
<dbReference type="PDBsum" id="6AX6"/>
<dbReference type="PDBsum" id="6AX7"/>
<dbReference type="SMR" id="Q5UQC3"/>
<dbReference type="CAZy" id="GT25">
    <property type="family name" value="Glycosyltransferase Family 25"/>
</dbReference>
<dbReference type="KEGG" id="vg:9924837"/>
<dbReference type="OrthoDB" id="1996at10239"/>
<dbReference type="Proteomes" id="UP000001134">
    <property type="component" value="Genome"/>
</dbReference>
<dbReference type="Proteomes" id="UP000201519">
    <property type="component" value="Genome"/>
</dbReference>
<dbReference type="Proteomes" id="UP000240552">
    <property type="component" value="Genome"/>
</dbReference>
<dbReference type="GO" id="GO:0005506">
    <property type="term" value="F:iron ion binding"/>
    <property type="evidence" value="ECO:0007669"/>
    <property type="project" value="InterPro"/>
</dbReference>
<dbReference type="GO" id="GO:0031418">
    <property type="term" value="F:L-ascorbic acid binding"/>
    <property type="evidence" value="ECO:0007669"/>
    <property type="project" value="UniProtKB-KW"/>
</dbReference>
<dbReference type="GO" id="GO:0050211">
    <property type="term" value="F:procollagen galactosyltransferase activity"/>
    <property type="evidence" value="ECO:0007669"/>
    <property type="project" value="TreeGrafter"/>
</dbReference>
<dbReference type="GO" id="GO:0008475">
    <property type="term" value="F:procollagen-lysine 5-dioxygenase activity"/>
    <property type="evidence" value="ECO:0007669"/>
    <property type="project" value="UniProtKB-EC"/>
</dbReference>
<dbReference type="CDD" id="cd06532">
    <property type="entry name" value="Glyco_transf_25"/>
    <property type="match status" value="1"/>
</dbReference>
<dbReference type="Gene3D" id="2.60.120.620">
    <property type="entry name" value="q2cbj1_9rhob like domain"/>
    <property type="match status" value="1"/>
</dbReference>
<dbReference type="InterPro" id="IPR050757">
    <property type="entry name" value="Collagen_mod_GT25"/>
</dbReference>
<dbReference type="InterPro" id="IPR002654">
    <property type="entry name" value="Glyco_trans_25"/>
</dbReference>
<dbReference type="InterPro" id="IPR029044">
    <property type="entry name" value="Nucleotide-diphossugar_trans"/>
</dbReference>
<dbReference type="InterPro" id="IPR005123">
    <property type="entry name" value="Oxoglu/Fe-dep_dioxygenase_dom"/>
</dbReference>
<dbReference type="InterPro" id="IPR006620">
    <property type="entry name" value="Pro_4_hyd_alph"/>
</dbReference>
<dbReference type="PANTHER" id="PTHR10730:SF53">
    <property type="entry name" value="GLYCOSYLTRANSFERASE 25 FAMILY MEMBER"/>
    <property type="match status" value="1"/>
</dbReference>
<dbReference type="PANTHER" id="PTHR10730">
    <property type="entry name" value="PROCOLLAGEN-LYSINE,2-OXOGLUTARATE 5-DIOXYGENASE/GLYCOSYLTRANSFERASE 25 FAMILY MEMBER"/>
    <property type="match status" value="1"/>
</dbReference>
<dbReference type="Pfam" id="PF01755">
    <property type="entry name" value="Glyco_transf_25"/>
    <property type="match status" value="1"/>
</dbReference>
<dbReference type="SMART" id="SM00702">
    <property type="entry name" value="P4Hc"/>
    <property type="match status" value="1"/>
</dbReference>
<dbReference type="SUPFAM" id="SSF53448">
    <property type="entry name" value="Nucleotide-diphospho-sugar transferases"/>
    <property type="match status" value="1"/>
</dbReference>
<dbReference type="PROSITE" id="PS51471">
    <property type="entry name" value="FE2OG_OXY"/>
    <property type="match status" value="1"/>
</dbReference>
<gene>
    <name type="ordered locus">MIMI_L230</name>
</gene>
<name>PLOD_MIMIV</name>
<proteinExistence type="evidence at protein level"/>
<organismHost>
    <name type="scientific">Acanthamoeba polyphaga</name>
    <name type="common">Amoeba</name>
    <dbReference type="NCBI Taxonomy" id="5757"/>
</organismHost>
<evidence type="ECO:0000250" key="1"/>
<evidence type="ECO:0000255" key="2"/>
<evidence type="ECO:0000255" key="3">
    <source>
        <dbReference type="PROSITE-ProRule" id="PRU00805"/>
    </source>
</evidence>
<evidence type="ECO:0000269" key="4">
    <source>
    </source>
</evidence>
<evidence type="ECO:0007829" key="5">
    <source>
        <dbReference type="PDB" id="6AX7"/>
    </source>
</evidence>
<organism>
    <name type="scientific">Acanthamoeba polyphaga mimivirus</name>
    <name type="common">APMV</name>
    <dbReference type="NCBI Taxonomy" id="212035"/>
    <lineage>
        <taxon>Viruses</taxon>
        <taxon>Varidnaviria</taxon>
        <taxon>Bamfordvirae</taxon>
        <taxon>Nucleocytoviricota</taxon>
        <taxon>Megaviricetes</taxon>
        <taxon>Imitervirales</taxon>
        <taxon>Mimiviridae</taxon>
        <taxon>Megamimivirinae</taxon>
        <taxon>Mimivirus</taxon>
        <taxon>Mimivirus bradfordmassiliense</taxon>
    </lineage>
</organism>
<comment type="function">
    <text evidence="4">Displays two enzymatic activities involved in procollagen processing. Forms hydroxylysine residues in -Xaa-Lys-Gly- sequences in collagens. These hydroxylysines are subsequentially glucosylated by a glucosyltransferase activity. Collagen post-translationally modified is detected in mimivirus virion.</text>
</comment>
<comment type="catalytic activity">
    <reaction>
        <text>L-lysyl-[collagen] + 2-oxoglutarate + O2 = (5R)-5-hydroxy-L-lysyl-[collagen] + succinate + CO2</text>
        <dbReference type="Rhea" id="RHEA:16569"/>
        <dbReference type="Rhea" id="RHEA-COMP:12751"/>
        <dbReference type="Rhea" id="RHEA-COMP:12752"/>
        <dbReference type="ChEBI" id="CHEBI:15379"/>
        <dbReference type="ChEBI" id="CHEBI:16526"/>
        <dbReference type="ChEBI" id="CHEBI:16810"/>
        <dbReference type="ChEBI" id="CHEBI:29969"/>
        <dbReference type="ChEBI" id="CHEBI:30031"/>
        <dbReference type="ChEBI" id="CHEBI:133442"/>
        <dbReference type="EC" id="1.14.11.4"/>
    </reaction>
</comment>
<comment type="cofactor">
    <cofactor evidence="1">
        <name>Fe cation</name>
        <dbReference type="ChEBI" id="CHEBI:24875"/>
    </cofactor>
</comment>
<comment type="cofactor">
    <cofactor evidence="1">
        <name>L-ascorbate</name>
        <dbReference type="ChEBI" id="CHEBI:38290"/>
    </cofactor>
</comment>
<keyword id="KW-0002">3D-structure</keyword>
<keyword id="KW-0223">Dioxygenase</keyword>
<keyword id="KW-0408">Iron</keyword>
<keyword id="KW-0479">Metal-binding</keyword>
<keyword id="KW-0560">Oxidoreductase</keyword>
<keyword id="KW-1185">Reference proteome</keyword>
<keyword id="KW-0808">Transferase</keyword>
<keyword id="KW-0847">Vitamin C</keyword>
<accession>Q5UQC3</accession>
<accession>E3VZ93</accession>
<sequence length="895" mass="103501">MISRTYVINLARRPDKKDRILAEFLKLKEKGVELNCVIFEAVDGNNPEHLSRFNFKIPNWTDLNSGKPMTNGEVGCALSHWSVWKDVVDCVENGTLDKDCRILVLEDDVVFLDNFMERYQTYTSEITYNCDLLYLHRKPLNPYTETKISTHIVKPNKSYWACAYVITYQCAKKFMNANYLENLIPSDEFIPIMHGCNVYGFEKLFSNCEKIDCYAVQPSLVKLTSNAFNDSETFHSGSYVPSNKFNFDTDKQFRIVYIGPTKGNSFHRFTEYCKLYLLPYKVIDEKETNDFVSLRSELQSLSEQDLNTTLMLVVSVNHNDFCNTIPCAPTNEFIDKYKQLTTDTNSIVSAVQNGTNKTMFIGWANKISEFINHYHQKLTESNAETDINLANLLLISSISSDFNCVVEDVEGNLFQLINEESDIVFSTTTSRVNNKLGKTPSVLYANSDSSVIVLNKVENYTGYGWNEYYGYHVYPVKFDVLPKIYLSIRIVKNANVTKIAETLDYPKELITVSISRSEHDSFYQADIQKFLLSGADYYFYISGDCIITRPTILKELLELNKDFVGPLMRKGTESWTNYWGDIDPSNGYYKRSFDYFDIIGRDRVGCWNVPYLASVYLIKKSVIEQVPNLFTENSHMWNGSNIDMRLCHNLRKNNVFMYLSNLRPYGHIDDSINLEVLSGVPTEVTLYDLPTRKEEWEKKYLHPEFLSHLQNFKDFDYTEICNDVYSFPLFTPAFCKEVIEVMDKANLWSKGGDSYFDPRIGGVESYPTQDTQLYEVGLDKQWHYVVFNYVAPFVRHLYNNYKTKDINLAFVVKYDMERQSELAPHHDSSTYTLNIALNEYGKEYTAGGCEFIRHKFIWQGQKVGYATIHAGKLLAYHRALPITSGKRYILVSFVN</sequence>
<reference key="1">
    <citation type="journal article" date="2004" name="Science">
        <title>The 1.2-megabase genome sequence of Mimivirus.</title>
        <authorList>
            <person name="Raoult D."/>
            <person name="Audic S."/>
            <person name="Robert C."/>
            <person name="Abergel C."/>
            <person name="Renesto P."/>
            <person name="Ogata H."/>
            <person name="La Scola B."/>
            <person name="Susan M."/>
            <person name="Claverie J.-M."/>
        </authorList>
    </citation>
    <scope>NUCLEOTIDE SEQUENCE [LARGE SCALE GENOMIC DNA]</scope>
    <source>
        <strain>Rowbotham-Bradford</strain>
    </source>
</reference>
<reference key="2">
    <citation type="journal article" date="2011" name="Proc. Natl. Acad. Sci. U.S.A.">
        <title>Mimivirus shows dramatic genome reduction after intraamoebal culture.</title>
        <authorList>
            <person name="Boyer M."/>
            <person name="Azza S."/>
            <person name="Barrassi L."/>
            <person name="Klose T."/>
            <person name="Campocasso A."/>
            <person name="Pagnier I."/>
            <person name="Fournous G."/>
            <person name="Borg A."/>
            <person name="Robert C."/>
            <person name="Zhang X."/>
            <person name="Desnues C."/>
            <person name="Henrissat B."/>
            <person name="Rossmann M.G."/>
            <person name="La Scola B."/>
            <person name="Raoult D."/>
        </authorList>
    </citation>
    <scope>NUCLEOTIDE SEQUENCE [LARGE SCALE GENOMIC DNA]</scope>
    <source>
        <strain>M4</strain>
    </source>
</reference>
<reference key="3">
    <citation type="journal article" date="2011" name="Virol. J.">
        <title>Breaking the 1000-gene barrier for Mimivirus using ultra-deep genome and transcriptome sequencing.</title>
        <authorList>
            <person name="Legendre M."/>
            <person name="Santini S."/>
            <person name="Rico A."/>
            <person name="Abergel C."/>
            <person name="Claverie J.M."/>
        </authorList>
    </citation>
    <scope>NUCLEOTIDE SEQUENCE [LARGE SCALE GENOMIC DNA / MRNA]</scope>
</reference>
<reference key="4">
    <citation type="journal article" date="2011" name="J. Biol. Chem.">
        <title>Mimivirus collagen is modified by bifunctional lysyl hydroxylase and glycosyltransferase enzyme.</title>
        <authorList>
            <person name="Luther K.B."/>
            <person name="Hulsmeier A.J."/>
            <person name="Schegg B."/>
            <person name="Deuber S.A."/>
            <person name="Raoult D."/>
            <person name="Hennet T."/>
        </authorList>
    </citation>
    <scope>FUNCTION</scope>
    <scope>CHARACTERIZATION</scope>
    <scope>MUTAGENESIS OF ASP-250 AND 825-HIS--ASP-827</scope>
    <source>
        <strain>M4</strain>
    </source>
</reference>
<protein>
    <recommendedName>
        <fullName>Procollagen lysyl hydroxylase and glycosyltransferase</fullName>
        <shortName>LHGT</shortName>
        <ecNumber>1.14.11.4</ecNumber>
        <ecNumber>2.4.1.-</ecNumber>
    </recommendedName>
    <alternativeName>
        <fullName>Lysyl hydroxylase</fullName>
    </alternativeName>
    <alternativeName>
        <fullName>Procollagen-lysine,2-oxoglutarate 5-dioxygenase</fullName>
    </alternativeName>
</protein>
<feature type="chain" id="PRO_0000164452" description="Procollagen lysyl hydroxylase and glycosyltransferase">
    <location>
        <begin position="1"/>
        <end position="895"/>
    </location>
</feature>
<feature type="domain" description="Fe2OG dioxygenase" evidence="3">
    <location>
        <begin position="805"/>
        <end position="895"/>
    </location>
</feature>
<feature type="region of interest" description="Lysyl hydroxylase region">
    <location>
        <begin position="1"/>
        <end position="194"/>
    </location>
</feature>
<feature type="region of interest" description="Glucosyl transferase region">
    <location>
        <begin position="537"/>
        <end position="895"/>
    </location>
</feature>
<feature type="active site" evidence="2">
    <location>
        <position position="887"/>
    </location>
</feature>
<feature type="binding site" evidence="3">
    <location>
        <position position="825"/>
    </location>
    <ligand>
        <name>Fe cation</name>
        <dbReference type="ChEBI" id="CHEBI:24875"/>
    </ligand>
</feature>
<feature type="binding site" evidence="3">
    <location>
        <position position="827"/>
    </location>
    <ligand>
        <name>Fe cation</name>
        <dbReference type="ChEBI" id="CHEBI:24875"/>
    </ligand>
</feature>
<feature type="binding site" evidence="3">
    <location>
        <position position="877"/>
    </location>
    <ligand>
        <name>Fe cation</name>
        <dbReference type="ChEBI" id="CHEBI:24875"/>
    </ligand>
</feature>
<feature type="mutagenesis site" description="Partial loss of glucosyl transferase activity." evidence="4">
    <original>D</original>
    <variation>A</variation>
    <location>
        <position position="250"/>
    </location>
</feature>
<feature type="mutagenesis site" description="Complete loss of lysyl hydroxylase activity." evidence="4">
    <original>HHD</original>
    <variation>SHA</variation>
    <location>
        <begin position="825"/>
        <end position="827"/>
    </location>
</feature>
<feature type="turn" evidence="5">
    <location>
        <begin position="689"/>
        <end position="692"/>
    </location>
</feature>
<feature type="helix" evidence="5">
    <location>
        <begin position="693"/>
        <end position="700"/>
    </location>
</feature>
<feature type="helix" evidence="5">
    <location>
        <begin position="703"/>
        <end position="706"/>
    </location>
</feature>
<feature type="turn" evidence="5">
    <location>
        <begin position="707"/>
        <end position="710"/>
    </location>
</feature>
<feature type="strand" evidence="5">
    <location>
        <begin position="718"/>
        <end position="721"/>
    </location>
</feature>
<feature type="strand" evidence="5">
    <location>
        <begin position="724"/>
        <end position="728"/>
    </location>
</feature>
<feature type="helix" evidence="5">
    <location>
        <begin position="732"/>
        <end position="745"/>
    </location>
</feature>
<feature type="strand" evidence="5">
    <location>
        <begin position="770"/>
        <end position="772"/>
    </location>
</feature>
<feature type="helix" evidence="5">
    <location>
        <begin position="773"/>
        <end position="776"/>
    </location>
</feature>
<feature type="helix" evidence="5">
    <location>
        <begin position="779"/>
        <end position="788"/>
    </location>
</feature>
<feature type="helix" evidence="5">
    <location>
        <begin position="790"/>
        <end position="797"/>
    </location>
</feature>
<feature type="turn" evidence="5">
    <location>
        <begin position="798"/>
        <end position="800"/>
    </location>
</feature>
<feature type="strand" evidence="5">
    <location>
        <begin position="806"/>
        <end position="815"/>
    </location>
</feature>
<feature type="strand" evidence="5">
    <location>
        <begin position="828"/>
        <end position="836"/>
    </location>
</feature>
<feature type="turn" evidence="5">
    <location>
        <begin position="841"/>
        <end position="843"/>
    </location>
</feature>
<feature type="strand" evidence="5">
    <location>
        <begin position="844"/>
        <end position="846"/>
    </location>
</feature>
<feature type="strand" evidence="5">
    <location>
        <begin position="849"/>
        <end position="851"/>
    </location>
</feature>
<feature type="turn" evidence="5">
    <location>
        <begin position="852"/>
        <end position="855"/>
    </location>
</feature>
<feature type="strand" evidence="5">
    <location>
        <begin position="856"/>
        <end position="858"/>
    </location>
</feature>
<feature type="strand" evidence="5">
    <location>
        <begin position="865"/>
        <end position="874"/>
    </location>
</feature>
<feature type="strand" evidence="5">
    <location>
        <begin position="877"/>
        <end position="879"/>
    </location>
</feature>
<feature type="strand" evidence="5">
    <location>
        <begin position="882"/>
        <end position="885"/>
    </location>
</feature>
<feature type="strand" evidence="5">
    <location>
        <begin position="887"/>
        <end position="894"/>
    </location>
</feature>